<organism>
    <name type="scientific">Shewanella baltica (strain OS195)</name>
    <dbReference type="NCBI Taxonomy" id="399599"/>
    <lineage>
        <taxon>Bacteria</taxon>
        <taxon>Pseudomonadati</taxon>
        <taxon>Pseudomonadota</taxon>
        <taxon>Gammaproteobacteria</taxon>
        <taxon>Alteromonadales</taxon>
        <taxon>Shewanellaceae</taxon>
        <taxon>Shewanella</taxon>
    </lineage>
</organism>
<sequence length="880" mass="95543">MADTTVEKLATEVGKSVERLIEQFSQAGIKKGQADNVTEAEKQQLLDYLKKQHGGENAPTKMTLQRKTVSTLSVAGNGGQSKDVKVEVRKTRTFVKRDANEATLKAEEEAKVEAEALAKAKAEAEAAAAVKAKAEADAKAKADAEAKAKAKAAAEVKVVKDMSPEAEAARLEAERLKAAQEAATKRKQDEEAAKAAETARLLAEEHSKRWAEEERQRLEAEKNGDHHITTSKVARAAEDTSDLDEEKRGRRARNKSNAKKRGGKDARDGREKHMRNRSTAPESMAHGFNKPVAAVSRDVRIGETVTVSELAHLMAVKATEIIKQMMKMGSMVTINQVLDQETAQMVAEEMGHKVVLIRENELEHQVLKDRDDEDGIKQESRAPVVTIMGHVDHGKTSLLDYIRRAKVAAGEAGGITQHIGAYHVETENGMITFLDTPGHAAFTAMRARGAKATDIVVLVVAADDGVMPQTIEAIQHAKAGNVPLIVAVNKMDKPEADIDRVKSELSQHGVMSEDWGGDNMFAFVSAKTGEGVDELLEGILLQAEVLELKAVRDGMAAGVVIESQLDKGRGPVATILVQEGTLRQGDIVLCGLEYGKIRAMKDENGRSITEAGPSIPVEILGLSGVPSAGDEATVVRDERKAREVALYRQGKFRDVKLARQQKSKLENMFANMTEGEVKELNIVLKADVQGSLEAITDSLTGLSTDEVKVNIIARGVGALTETDATLAAASNAILVGFNVRADAQARKTIDSESVDLRYYSVIYNLIDEVRAAMTGMLSPEFKQQIIGLAEVRDVFKSPKLGAIAGCMVTEGTIKRSAPIRVLRDNVVIYEGELESLRRFKDDVAEVRNGMECGIGVKNYNDVRVGDQIEVFETVEIARTL</sequence>
<reference key="1">
    <citation type="submission" date="2007-11" db="EMBL/GenBank/DDBJ databases">
        <title>Complete sequence of chromosome of Shewanella baltica OS195.</title>
        <authorList>
            <consortium name="US DOE Joint Genome Institute"/>
            <person name="Copeland A."/>
            <person name="Lucas S."/>
            <person name="Lapidus A."/>
            <person name="Barry K."/>
            <person name="Glavina del Rio T."/>
            <person name="Dalin E."/>
            <person name="Tice H."/>
            <person name="Pitluck S."/>
            <person name="Chain P."/>
            <person name="Malfatti S."/>
            <person name="Shin M."/>
            <person name="Vergez L."/>
            <person name="Schmutz J."/>
            <person name="Larimer F."/>
            <person name="Land M."/>
            <person name="Hauser L."/>
            <person name="Kyrpides N."/>
            <person name="Kim E."/>
            <person name="Brettar I."/>
            <person name="Rodrigues J."/>
            <person name="Konstantinidis K."/>
            <person name="Klappenbach J."/>
            <person name="Hofle M."/>
            <person name="Tiedje J."/>
            <person name="Richardson P."/>
        </authorList>
    </citation>
    <scope>NUCLEOTIDE SEQUENCE [LARGE SCALE GENOMIC DNA]</scope>
    <source>
        <strain>OS195</strain>
    </source>
</reference>
<comment type="function">
    <text evidence="2">One of the essential components for the initiation of protein synthesis. Protects formylmethionyl-tRNA from spontaneous hydrolysis and promotes its binding to the 30S ribosomal subunits. Also involved in the hydrolysis of GTP during the formation of the 70S ribosomal complex.</text>
</comment>
<comment type="subcellular location">
    <subcellularLocation>
        <location evidence="2">Cytoplasm</location>
    </subcellularLocation>
</comment>
<comment type="similarity">
    <text evidence="2">Belongs to the TRAFAC class translation factor GTPase superfamily. Classic translation factor GTPase family. IF-2 subfamily.</text>
</comment>
<feature type="chain" id="PRO_1000075618" description="Translation initiation factor IF-2">
    <location>
        <begin position="1"/>
        <end position="880"/>
    </location>
</feature>
<feature type="domain" description="tr-type G">
    <location>
        <begin position="380"/>
        <end position="549"/>
    </location>
</feature>
<feature type="region of interest" description="Disordered" evidence="3">
    <location>
        <begin position="180"/>
        <end position="289"/>
    </location>
</feature>
<feature type="region of interest" description="G1" evidence="1">
    <location>
        <begin position="389"/>
        <end position="396"/>
    </location>
</feature>
<feature type="region of interest" description="G2" evidence="1">
    <location>
        <begin position="414"/>
        <end position="418"/>
    </location>
</feature>
<feature type="region of interest" description="G3" evidence="1">
    <location>
        <begin position="435"/>
        <end position="438"/>
    </location>
</feature>
<feature type="region of interest" description="G4" evidence="1">
    <location>
        <begin position="489"/>
        <end position="492"/>
    </location>
</feature>
<feature type="region of interest" description="G5" evidence="1">
    <location>
        <begin position="525"/>
        <end position="527"/>
    </location>
</feature>
<feature type="compositionally biased region" description="Basic and acidic residues" evidence="3">
    <location>
        <begin position="180"/>
        <end position="194"/>
    </location>
</feature>
<feature type="compositionally biased region" description="Basic and acidic residues" evidence="3">
    <location>
        <begin position="202"/>
        <end position="228"/>
    </location>
</feature>
<feature type="compositionally biased region" description="Basic residues" evidence="3">
    <location>
        <begin position="249"/>
        <end position="262"/>
    </location>
</feature>
<feature type="binding site" evidence="2">
    <location>
        <begin position="389"/>
        <end position="396"/>
    </location>
    <ligand>
        <name>GTP</name>
        <dbReference type="ChEBI" id="CHEBI:37565"/>
    </ligand>
</feature>
<feature type="binding site" evidence="2">
    <location>
        <begin position="435"/>
        <end position="439"/>
    </location>
    <ligand>
        <name>GTP</name>
        <dbReference type="ChEBI" id="CHEBI:37565"/>
    </ligand>
</feature>
<feature type="binding site" evidence="2">
    <location>
        <begin position="489"/>
        <end position="492"/>
    </location>
    <ligand>
        <name>GTP</name>
        <dbReference type="ChEBI" id="CHEBI:37565"/>
    </ligand>
</feature>
<dbReference type="EMBL" id="CP000891">
    <property type="protein sequence ID" value="ABX50579.1"/>
    <property type="molecule type" value="Genomic_DNA"/>
</dbReference>
<dbReference type="RefSeq" id="WP_006082716.1">
    <property type="nucleotide sequence ID" value="NC_009997.1"/>
</dbReference>
<dbReference type="SMR" id="A9KZX1"/>
<dbReference type="GeneID" id="11774928"/>
<dbReference type="KEGG" id="sbn:Sbal195_3417"/>
<dbReference type="HOGENOM" id="CLU_006301_6_3_6"/>
<dbReference type="Proteomes" id="UP000000770">
    <property type="component" value="Chromosome"/>
</dbReference>
<dbReference type="GO" id="GO:0005829">
    <property type="term" value="C:cytosol"/>
    <property type="evidence" value="ECO:0007669"/>
    <property type="project" value="TreeGrafter"/>
</dbReference>
<dbReference type="GO" id="GO:0005525">
    <property type="term" value="F:GTP binding"/>
    <property type="evidence" value="ECO:0007669"/>
    <property type="project" value="UniProtKB-KW"/>
</dbReference>
<dbReference type="GO" id="GO:0003924">
    <property type="term" value="F:GTPase activity"/>
    <property type="evidence" value="ECO:0007669"/>
    <property type="project" value="UniProtKB-UniRule"/>
</dbReference>
<dbReference type="GO" id="GO:0097216">
    <property type="term" value="F:guanosine tetraphosphate binding"/>
    <property type="evidence" value="ECO:0007669"/>
    <property type="project" value="UniProtKB-ARBA"/>
</dbReference>
<dbReference type="GO" id="GO:0003743">
    <property type="term" value="F:translation initiation factor activity"/>
    <property type="evidence" value="ECO:0007669"/>
    <property type="project" value="UniProtKB-UniRule"/>
</dbReference>
<dbReference type="CDD" id="cd01887">
    <property type="entry name" value="IF2_eIF5B"/>
    <property type="match status" value="1"/>
</dbReference>
<dbReference type="CDD" id="cd03702">
    <property type="entry name" value="IF2_mtIF2_II"/>
    <property type="match status" value="1"/>
</dbReference>
<dbReference type="CDD" id="cd03692">
    <property type="entry name" value="mtIF2_IVc"/>
    <property type="match status" value="1"/>
</dbReference>
<dbReference type="FunFam" id="2.40.30.10:FF:000007">
    <property type="entry name" value="Translation initiation factor IF-2"/>
    <property type="match status" value="1"/>
</dbReference>
<dbReference type="FunFam" id="2.40.30.10:FF:000008">
    <property type="entry name" value="Translation initiation factor IF-2"/>
    <property type="match status" value="1"/>
</dbReference>
<dbReference type="FunFam" id="3.40.50.10050:FF:000001">
    <property type="entry name" value="Translation initiation factor IF-2"/>
    <property type="match status" value="1"/>
</dbReference>
<dbReference type="FunFam" id="3.40.50.300:FF:000019">
    <property type="entry name" value="Translation initiation factor IF-2"/>
    <property type="match status" value="1"/>
</dbReference>
<dbReference type="Gene3D" id="3.40.50.300">
    <property type="entry name" value="P-loop containing nucleotide triphosphate hydrolases"/>
    <property type="match status" value="1"/>
</dbReference>
<dbReference type="Gene3D" id="3.30.56.50">
    <property type="entry name" value="Putative DNA-binding domain, N-terminal subdomain of bacterial translation initiation factor IF2"/>
    <property type="match status" value="1"/>
</dbReference>
<dbReference type="Gene3D" id="2.40.30.10">
    <property type="entry name" value="Translation factors"/>
    <property type="match status" value="2"/>
</dbReference>
<dbReference type="Gene3D" id="3.40.50.10050">
    <property type="entry name" value="Translation initiation factor IF- 2, domain 3"/>
    <property type="match status" value="1"/>
</dbReference>
<dbReference type="HAMAP" id="MF_00100_B">
    <property type="entry name" value="IF_2_B"/>
    <property type="match status" value="1"/>
</dbReference>
<dbReference type="InterPro" id="IPR009061">
    <property type="entry name" value="DNA-bd_dom_put_sf"/>
</dbReference>
<dbReference type="InterPro" id="IPR053905">
    <property type="entry name" value="EF-G-like_DII"/>
</dbReference>
<dbReference type="InterPro" id="IPR004161">
    <property type="entry name" value="EFTu-like_2"/>
</dbReference>
<dbReference type="InterPro" id="IPR013575">
    <property type="entry name" value="IF2_assoc_dom_bac"/>
</dbReference>
<dbReference type="InterPro" id="IPR044145">
    <property type="entry name" value="IF2_II"/>
</dbReference>
<dbReference type="InterPro" id="IPR006847">
    <property type="entry name" value="IF2_N"/>
</dbReference>
<dbReference type="InterPro" id="IPR027417">
    <property type="entry name" value="P-loop_NTPase"/>
</dbReference>
<dbReference type="InterPro" id="IPR005225">
    <property type="entry name" value="Small_GTP-bd"/>
</dbReference>
<dbReference type="InterPro" id="IPR000795">
    <property type="entry name" value="T_Tr_GTP-bd_dom"/>
</dbReference>
<dbReference type="InterPro" id="IPR000178">
    <property type="entry name" value="TF_IF2_bacterial-like"/>
</dbReference>
<dbReference type="InterPro" id="IPR015760">
    <property type="entry name" value="TIF_IF2"/>
</dbReference>
<dbReference type="InterPro" id="IPR023115">
    <property type="entry name" value="TIF_IF2_dom3"/>
</dbReference>
<dbReference type="InterPro" id="IPR036925">
    <property type="entry name" value="TIF_IF2_dom3_sf"/>
</dbReference>
<dbReference type="InterPro" id="IPR009000">
    <property type="entry name" value="Transl_B-barrel_sf"/>
</dbReference>
<dbReference type="NCBIfam" id="TIGR00487">
    <property type="entry name" value="IF-2"/>
    <property type="match status" value="1"/>
</dbReference>
<dbReference type="NCBIfam" id="TIGR00231">
    <property type="entry name" value="small_GTP"/>
    <property type="match status" value="1"/>
</dbReference>
<dbReference type="PANTHER" id="PTHR43381:SF5">
    <property type="entry name" value="TR-TYPE G DOMAIN-CONTAINING PROTEIN"/>
    <property type="match status" value="1"/>
</dbReference>
<dbReference type="PANTHER" id="PTHR43381">
    <property type="entry name" value="TRANSLATION INITIATION FACTOR IF-2-RELATED"/>
    <property type="match status" value="1"/>
</dbReference>
<dbReference type="Pfam" id="PF22042">
    <property type="entry name" value="EF-G_D2"/>
    <property type="match status" value="1"/>
</dbReference>
<dbReference type="Pfam" id="PF00009">
    <property type="entry name" value="GTP_EFTU"/>
    <property type="match status" value="1"/>
</dbReference>
<dbReference type="Pfam" id="PF03144">
    <property type="entry name" value="GTP_EFTU_D2"/>
    <property type="match status" value="1"/>
</dbReference>
<dbReference type="Pfam" id="PF11987">
    <property type="entry name" value="IF-2"/>
    <property type="match status" value="1"/>
</dbReference>
<dbReference type="Pfam" id="PF08364">
    <property type="entry name" value="IF2_assoc"/>
    <property type="match status" value="1"/>
</dbReference>
<dbReference type="Pfam" id="PF04760">
    <property type="entry name" value="IF2_N"/>
    <property type="match status" value="2"/>
</dbReference>
<dbReference type="SUPFAM" id="SSF52156">
    <property type="entry name" value="Initiation factor IF2/eIF5b, domain 3"/>
    <property type="match status" value="1"/>
</dbReference>
<dbReference type="SUPFAM" id="SSF52540">
    <property type="entry name" value="P-loop containing nucleoside triphosphate hydrolases"/>
    <property type="match status" value="1"/>
</dbReference>
<dbReference type="SUPFAM" id="SSF46955">
    <property type="entry name" value="Putative DNA-binding domain"/>
    <property type="match status" value="1"/>
</dbReference>
<dbReference type="SUPFAM" id="SSF50447">
    <property type="entry name" value="Translation proteins"/>
    <property type="match status" value="2"/>
</dbReference>
<dbReference type="PROSITE" id="PS51722">
    <property type="entry name" value="G_TR_2"/>
    <property type="match status" value="1"/>
</dbReference>
<dbReference type="PROSITE" id="PS01176">
    <property type="entry name" value="IF2"/>
    <property type="match status" value="1"/>
</dbReference>
<proteinExistence type="inferred from homology"/>
<keyword id="KW-0963">Cytoplasm</keyword>
<keyword id="KW-0342">GTP-binding</keyword>
<keyword id="KW-0396">Initiation factor</keyword>
<keyword id="KW-0547">Nucleotide-binding</keyword>
<keyword id="KW-0648">Protein biosynthesis</keyword>
<evidence type="ECO:0000250" key="1"/>
<evidence type="ECO:0000255" key="2">
    <source>
        <dbReference type="HAMAP-Rule" id="MF_00100"/>
    </source>
</evidence>
<evidence type="ECO:0000256" key="3">
    <source>
        <dbReference type="SAM" id="MobiDB-lite"/>
    </source>
</evidence>
<protein>
    <recommendedName>
        <fullName evidence="2">Translation initiation factor IF-2</fullName>
    </recommendedName>
</protein>
<gene>
    <name evidence="2" type="primary">infB</name>
    <name type="ordered locus">Sbal195_3417</name>
</gene>
<accession>A9KZX1</accession>
<name>IF2_SHEB9</name>